<protein>
    <recommendedName>
        <fullName evidence="1">Large ribosomal subunit protein bL19</fullName>
    </recommendedName>
    <alternativeName>
        <fullName evidence="2">50S ribosomal protein L19</fullName>
    </alternativeName>
</protein>
<evidence type="ECO:0000255" key="1">
    <source>
        <dbReference type="HAMAP-Rule" id="MF_00402"/>
    </source>
</evidence>
<evidence type="ECO:0000305" key="2"/>
<gene>
    <name evidence="1" type="primary">rplS</name>
    <name type="ordered locus">Tgr7_0849</name>
</gene>
<accession>B8GN79</accession>
<proteinExistence type="inferred from homology"/>
<comment type="function">
    <text evidence="1">This protein is located at the 30S-50S ribosomal subunit interface and may play a role in the structure and function of the aminoacyl-tRNA binding site.</text>
</comment>
<comment type="similarity">
    <text evidence="1">Belongs to the bacterial ribosomal protein bL19 family.</text>
</comment>
<organism>
    <name type="scientific">Thioalkalivibrio sulfidiphilus (strain HL-EbGR7)</name>
    <dbReference type="NCBI Taxonomy" id="396588"/>
    <lineage>
        <taxon>Bacteria</taxon>
        <taxon>Pseudomonadati</taxon>
        <taxon>Pseudomonadota</taxon>
        <taxon>Gammaproteobacteria</taxon>
        <taxon>Chromatiales</taxon>
        <taxon>Ectothiorhodospiraceae</taxon>
        <taxon>Thioalkalivibrio</taxon>
    </lineage>
</organism>
<feature type="chain" id="PRO_1000193913" description="Large ribosomal subunit protein bL19">
    <location>
        <begin position="1"/>
        <end position="117"/>
    </location>
</feature>
<keyword id="KW-1185">Reference proteome</keyword>
<keyword id="KW-0687">Ribonucleoprotein</keyword>
<keyword id="KW-0689">Ribosomal protein</keyword>
<dbReference type="EMBL" id="CP001339">
    <property type="protein sequence ID" value="ACL71940.1"/>
    <property type="molecule type" value="Genomic_DNA"/>
</dbReference>
<dbReference type="RefSeq" id="WP_012637428.1">
    <property type="nucleotide sequence ID" value="NC_011901.1"/>
</dbReference>
<dbReference type="SMR" id="B8GN79"/>
<dbReference type="STRING" id="396588.Tgr7_0849"/>
<dbReference type="KEGG" id="tgr:Tgr7_0849"/>
<dbReference type="eggNOG" id="COG0335">
    <property type="taxonomic scope" value="Bacteria"/>
</dbReference>
<dbReference type="HOGENOM" id="CLU_103507_2_1_6"/>
<dbReference type="OrthoDB" id="9803541at2"/>
<dbReference type="Proteomes" id="UP000002383">
    <property type="component" value="Chromosome"/>
</dbReference>
<dbReference type="GO" id="GO:0022625">
    <property type="term" value="C:cytosolic large ribosomal subunit"/>
    <property type="evidence" value="ECO:0007669"/>
    <property type="project" value="TreeGrafter"/>
</dbReference>
<dbReference type="GO" id="GO:0003735">
    <property type="term" value="F:structural constituent of ribosome"/>
    <property type="evidence" value="ECO:0007669"/>
    <property type="project" value="InterPro"/>
</dbReference>
<dbReference type="GO" id="GO:0006412">
    <property type="term" value="P:translation"/>
    <property type="evidence" value="ECO:0007669"/>
    <property type="project" value="UniProtKB-UniRule"/>
</dbReference>
<dbReference type="FunFam" id="2.30.30.790:FF:000001">
    <property type="entry name" value="50S ribosomal protein L19"/>
    <property type="match status" value="1"/>
</dbReference>
<dbReference type="Gene3D" id="2.30.30.790">
    <property type="match status" value="1"/>
</dbReference>
<dbReference type="HAMAP" id="MF_00402">
    <property type="entry name" value="Ribosomal_bL19"/>
    <property type="match status" value="1"/>
</dbReference>
<dbReference type="InterPro" id="IPR001857">
    <property type="entry name" value="Ribosomal_bL19"/>
</dbReference>
<dbReference type="InterPro" id="IPR018257">
    <property type="entry name" value="Ribosomal_bL19_CS"/>
</dbReference>
<dbReference type="InterPro" id="IPR038657">
    <property type="entry name" value="Ribosomal_bL19_sf"/>
</dbReference>
<dbReference type="InterPro" id="IPR008991">
    <property type="entry name" value="Translation_prot_SH3-like_sf"/>
</dbReference>
<dbReference type="NCBIfam" id="TIGR01024">
    <property type="entry name" value="rplS_bact"/>
    <property type="match status" value="1"/>
</dbReference>
<dbReference type="PANTHER" id="PTHR15680:SF9">
    <property type="entry name" value="LARGE RIBOSOMAL SUBUNIT PROTEIN BL19M"/>
    <property type="match status" value="1"/>
</dbReference>
<dbReference type="PANTHER" id="PTHR15680">
    <property type="entry name" value="RIBOSOMAL PROTEIN L19"/>
    <property type="match status" value="1"/>
</dbReference>
<dbReference type="Pfam" id="PF01245">
    <property type="entry name" value="Ribosomal_L19"/>
    <property type="match status" value="1"/>
</dbReference>
<dbReference type="PIRSF" id="PIRSF002191">
    <property type="entry name" value="Ribosomal_L19"/>
    <property type="match status" value="1"/>
</dbReference>
<dbReference type="PRINTS" id="PR00061">
    <property type="entry name" value="RIBOSOMALL19"/>
</dbReference>
<dbReference type="SUPFAM" id="SSF50104">
    <property type="entry name" value="Translation proteins SH3-like domain"/>
    <property type="match status" value="1"/>
</dbReference>
<dbReference type="PROSITE" id="PS01015">
    <property type="entry name" value="RIBOSOMAL_L19"/>
    <property type="match status" value="1"/>
</dbReference>
<name>RL19_THISH</name>
<sequence length="117" mass="13313">MSKIIQQLEAEQMNREVPDFTPGDTVVVQVKVKEGNRERLQAFEGVVIAKRNRGLNSAFTVRKISHGEGVERVFQTYSPAVAEIQVKRRGSVRRAKLYYLRDLTGKAARIKEDIKRG</sequence>
<reference key="1">
    <citation type="journal article" date="2011" name="Stand. Genomic Sci.">
        <title>Complete genome sequence of 'Thioalkalivibrio sulfidophilus' HL-EbGr7.</title>
        <authorList>
            <person name="Muyzer G."/>
            <person name="Sorokin D.Y."/>
            <person name="Mavromatis K."/>
            <person name="Lapidus A."/>
            <person name="Clum A."/>
            <person name="Ivanova N."/>
            <person name="Pati A."/>
            <person name="d'Haeseleer P."/>
            <person name="Woyke T."/>
            <person name="Kyrpides N.C."/>
        </authorList>
    </citation>
    <scope>NUCLEOTIDE SEQUENCE [LARGE SCALE GENOMIC DNA]</scope>
    <source>
        <strain>HL-EbGR7</strain>
    </source>
</reference>